<keyword id="KW-0963">Cytoplasm</keyword>
<keyword id="KW-0238">DNA-binding</keyword>
<keyword id="KW-0804">Transcription</keyword>
<keyword id="KW-0805">Transcription regulation</keyword>
<organism>
    <name type="scientific">Endomicrobium trichonymphae</name>
    <dbReference type="NCBI Taxonomy" id="1408204"/>
    <lineage>
        <taxon>Bacteria</taxon>
        <taxon>Pseudomonadati</taxon>
        <taxon>Elusimicrobiota</taxon>
        <taxon>Endomicrobiia</taxon>
        <taxon>Endomicrobiales</taxon>
        <taxon>Endomicrobiaceae</taxon>
        <taxon>Candidatus Endomicrobiellum</taxon>
    </lineage>
</organism>
<dbReference type="EMBL" id="AP009510">
    <property type="protein sequence ID" value="BAG13945.1"/>
    <property type="molecule type" value="Genomic_DNA"/>
</dbReference>
<dbReference type="RefSeq" id="WP_015423471.1">
    <property type="nucleotide sequence ID" value="NC_020419.1"/>
</dbReference>
<dbReference type="SMR" id="B1H0B3"/>
<dbReference type="STRING" id="471821.TGRD_462"/>
<dbReference type="KEGG" id="rsd:TGRD_462"/>
<dbReference type="PATRIC" id="fig|471821.5.peg.749"/>
<dbReference type="HOGENOM" id="CLU_062974_2_2_0"/>
<dbReference type="Proteomes" id="UP000001691">
    <property type="component" value="Chromosome"/>
</dbReference>
<dbReference type="GO" id="GO:0005829">
    <property type="term" value="C:cytosol"/>
    <property type="evidence" value="ECO:0007669"/>
    <property type="project" value="TreeGrafter"/>
</dbReference>
<dbReference type="GO" id="GO:0003677">
    <property type="term" value="F:DNA binding"/>
    <property type="evidence" value="ECO:0007669"/>
    <property type="project" value="UniProtKB-UniRule"/>
</dbReference>
<dbReference type="GO" id="GO:0006355">
    <property type="term" value="P:regulation of DNA-templated transcription"/>
    <property type="evidence" value="ECO:0007669"/>
    <property type="project" value="UniProtKB-UniRule"/>
</dbReference>
<dbReference type="FunFam" id="1.10.10.200:FF:000002">
    <property type="entry name" value="Probable transcriptional regulatory protein CLM62_37755"/>
    <property type="match status" value="1"/>
</dbReference>
<dbReference type="Gene3D" id="1.10.10.200">
    <property type="match status" value="1"/>
</dbReference>
<dbReference type="Gene3D" id="3.30.70.980">
    <property type="match status" value="2"/>
</dbReference>
<dbReference type="HAMAP" id="MF_00693">
    <property type="entry name" value="Transcrip_reg_TACO1"/>
    <property type="match status" value="1"/>
</dbReference>
<dbReference type="InterPro" id="IPR017856">
    <property type="entry name" value="Integrase-like_N"/>
</dbReference>
<dbReference type="InterPro" id="IPR048300">
    <property type="entry name" value="TACO1_YebC-like_2nd/3rd_dom"/>
</dbReference>
<dbReference type="InterPro" id="IPR049083">
    <property type="entry name" value="TACO1_YebC_N"/>
</dbReference>
<dbReference type="InterPro" id="IPR002876">
    <property type="entry name" value="Transcrip_reg_TACO1-like"/>
</dbReference>
<dbReference type="InterPro" id="IPR026564">
    <property type="entry name" value="Transcrip_reg_TACO1-like_dom3"/>
</dbReference>
<dbReference type="InterPro" id="IPR029072">
    <property type="entry name" value="YebC-like"/>
</dbReference>
<dbReference type="NCBIfam" id="NF001030">
    <property type="entry name" value="PRK00110.1"/>
    <property type="match status" value="1"/>
</dbReference>
<dbReference type="NCBIfam" id="NF009044">
    <property type="entry name" value="PRK12378.1"/>
    <property type="match status" value="1"/>
</dbReference>
<dbReference type="NCBIfam" id="TIGR01033">
    <property type="entry name" value="YebC/PmpR family DNA-binding transcriptional regulator"/>
    <property type="match status" value="1"/>
</dbReference>
<dbReference type="PANTHER" id="PTHR12532:SF6">
    <property type="entry name" value="TRANSCRIPTIONAL REGULATORY PROTEIN YEBC-RELATED"/>
    <property type="match status" value="1"/>
</dbReference>
<dbReference type="PANTHER" id="PTHR12532">
    <property type="entry name" value="TRANSLATIONAL ACTIVATOR OF CYTOCHROME C OXIDASE 1"/>
    <property type="match status" value="1"/>
</dbReference>
<dbReference type="Pfam" id="PF20772">
    <property type="entry name" value="TACO1_YebC_N"/>
    <property type="match status" value="1"/>
</dbReference>
<dbReference type="Pfam" id="PF01709">
    <property type="entry name" value="Transcrip_reg"/>
    <property type="match status" value="1"/>
</dbReference>
<dbReference type="SUPFAM" id="SSF75625">
    <property type="entry name" value="YebC-like"/>
    <property type="match status" value="1"/>
</dbReference>
<comment type="subcellular location">
    <subcellularLocation>
        <location evidence="1">Cytoplasm</location>
    </subcellularLocation>
</comment>
<comment type="similarity">
    <text evidence="1">Belongs to the TACO1 family.</text>
</comment>
<protein>
    <recommendedName>
        <fullName evidence="1">Probable transcriptional regulatory protein TGRD_462</fullName>
    </recommendedName>
</protein>
<reference key="1">
    <citation type="journal article" date="2008" name="Proc. Natl. Acad. Sci. U.S.A.">
        <title>Complete genome of the uncultured termite group 1 bacteria in a single host protist cell.</title>
        <authorList>
            <person name="Hongoh Y."/>
            <person name="Sharma V.K."/>
            <person name="Prakash T."/>
            <person name="Noda S."/>
            <person name="Taylor T.D."/>
            <person name="Kudo T."/>
            <person name="Sakaki Y."/>
            <person name="Toyoda A."/>
            <person name="Hattori M."/>
            <person name="Ohkuma M."/>
        </authorList>
    </citation>
    <scope>NUCLEOTIDE SEQUENCE [LARGE SCALE GENOMIC DNA]</scope>
</reference>
<evidence type="ECO:0000255" key="1">
    <source>
        <dbReference type="HAMAP-Rule" id="MF_00693"/>
    </source>
</evidence>
<feature type="chain" id="PRO_1000132252" description="Probable transcriptional regulatory protein TGRD_462">
    <location>
        <begin position="1"/>
        <end position="251"/>
    </location>
</feature>
<proteinExistence type="inferred from homology"/>
<accession>B1H0B3</accession>
<name>Y462_ENDTX</name>
<gene>
    <name type="ordered locus">TGRD_462</name>
</gene>
<sequence>MSGHNKWASIKHKKTATDVKKGKVFTKIIREIVVATKESGAQIENNARLRKAIEDAKEANMPQDNIKKAIQRGTGEIPGAIYEEMVYEGYGPAGVALIVEVTTDNKNRTASDIRKMFSSHNGNLGEAGCVGWMFERKGYITVKKSAADEEIVMNTVLEAAVEDFKSEADSDVYEIITLSSDLETVKNVLKEKNITVESAEVTMVPQTQIALKSDNAKNMLKLMDALEDHDDVKNVYANFDISSEDMEKLNA</sequence>